<evidence type="ECO:0000250" key="1">
    <source>
        <dbReference type="UniProtKB" id="Q14BU0"/>
    </source>
</evidence>
<evidence type="ECO:0000255" key="2"/>
<evidence type="ECO:0000256" key="3">
    <source>
        <dbReference type="SAM" id="MobiDB-lite"/>
    </source>
</evidence>
<evidence type="ECO:0000269" key="4">
    <source>
    </source>
</evidence>
<evidence type="ECO:0000303" key="5">
    <source>
    </source>
</evidence>
<evidence type="ECO:0000305" key="6"/>
<evidence type="ECO:0000312" key="7">
    <source>
        <dbReference type="EMBL" id="ABX09786.1"/>
    </source>
</evidence>
<organism>
    <name type="scientific">Acipenser naccarii</name>
    <name type="common">Adriatic sturgeon</name>
    <dbReference type="NCBI Taxonomy" id="42330"/>
    <lineage>
        <taxon>Eukaryota</taxon>
        <taxon>Metazoa</taxon>
        <taxon>Chordata</taxon>
        <taxon>Craniata</taxon>
        <taxon>Vertebrata</taxon>
        <taxon>Euteleostomi</taxon>
        <taxon>Actinopterygii</taxon>
        <taxon>Chondrostei</taxon>
        <taxon>Acipenseriformes</taxon>
        <taxon>Acipenseridae</taxon>
        <taxon>Acipenser</taxon>
    </lineage>
</organism>
<name>UCMA_ACINA</name>
<proteinExistence type="evidence at protein level"/>
<sequence>MNWNQIIFISLIATVLILAIANEAESAAVRTDKSDIKREDGENMKKRIFMQESEATAFLKRRGRRSTKSKDEVNAENRQRLAADERRREYYEEQRNEFENYVEEERDEQQERNREKTEQWREYHYDGLYPSYQYNRHHI</sequence>
<dbReference type="EMBL" id="EU022751">
    <property type="protein sequence ID" value="ABX09786.1"/>
    <property type="molecule type" value="mRNA"/>
</dbReference>
<dbReference type="EMBL" id="EU482149">
    <property type="protein sequence ID" value="ACD03736.1"/>
    <property type="molecule type" value="Genomic_DNA"/>
</dbReference>
<dbReference type="GO" id="GO:0031012">
    <property type="term" value="C:extracellular matrix"/>
    <property type="evidence" value="ECO:0007669"/>
    <property type="project" value="TreeGrafter"/>
</dbReference>
<dbReference type="GO" id="GO:0005576">
    <property type="term" value="C:extracellular region"/>
    <property type="evidence" value="ECO:0007669"/>
    <property type="project" value="UniProtKB-KW"/>
</dbReference>
<dbReference type="GO" id="GO:0048706">
    <property type="term" value="P:embryonic skeletal system development"/>
    <property type="evidence" value="ECO:0007669"/>
    <property type="project" value="TreeGrafter"/>
</dbReference>
<dbReference type="GO" id="GO:0045667">
    <property type="term" value="P:regulation of osteoblast differentiation"/>
    <property type="evidence" value="ECO:0007669"/>
    <property type="project" value="InterPro"/>
</dbReference>
<dbReference type="InterPro" id="IPR031386">
    <property type="entry name" value="UCMA"/>
</dbReference>
<dbReference type="PANTHER" id="PTHR28647">
    <property type="entry name" value="UNIQUE CARTILAGE MATRIX-ASSOCIATED PROTEIN"/>
    <property type="match status" value="1"/>
</dbReference>
<dbReference type="PANTHER" id="PTHR28647:SF2">
    <property type="entry name" value="UNIQUE CARTILAGE MATRIX-ASSOCIATED PROTEIN"/>
    <property type="match status" value="1"/>
</dbReference>
<dbReference type="Pfam" id="PF17085">
    <property type="entry name" value="UCMA"/>
    <property type="match status" value="1"/>
</dbReference>
<feature type="signal peptide" evidence="2">
    <location>
        <begin position="1"/>
        <end position="26"/>
    </location>
</feature>
<feature type="chain" id="PRO_0000371234" description="Unique cartilage matrix-associated protein" evidence="2">
    <location>
        <begin position="27"/>
        <end position="139"/>
    </location>
</feature>
<feature type="propeptide" id="PRO_0000371235" description="Ucma-N" evidence="4">
    <location>
        <begin position="27"/>
        <end position="65"/>
    </location>
</feature>
<feature type="chain" id="PRO_0000371236" description="Unique cartilage matrix-associated protein C-terminal fragment" evidence="4">
    <location>
        <begin position="66"/>
        <end position="139"/>
    </location>
</feature>
<feature type="region of interest" description="Disordered" evidence="3">
    <location>
        <begin position="60"/>
        <end position="117"/>
    </location>
</feature>
<feature type="coiled-coil region" evidence="2">
    <location>
        <begin position="70"/>
        <end position="123"/>
    </location>
</feature>
<feature type="compositionally biased region" description="Basic and acidic residues" evidence="3">
    <location>
        <begin position="68"/>
        <end position="98"/>
    </location>
</feature>
<feature type="modified residue" description="4-carboxyglutamate" evidence="4">
    <location>
        <position position="72"/>
    </location>
</feature>
<feature type="modified residue" description="4-carboxyglutamate" evidence="4">
    <location>
        <position position="76"/>
    </location>
</feature>
<feature type="modified residue" description="4-carboxyglutamate" evidence="4">
    <location>
        <position position="85"/>
    </location>
</feature>
<feature type="modified residue" description="4-carboxyglutamate" evidence="4">
    <location>
        <position position="89"/>
    </location>
</feature>
<feature type="modified residue" description="4-carboxyglutamate" evidence="4">
    <location>
        <position position="92"/>
    </location>
</feature>
<feature type="modified residue" description="4-carboxyglutamate" evidence="4">
    <location>
        <position position="93"/>
    </location>
</feature>
<feature type="modified residue" description="4-carboxyglutamate" evidence="4">
    <location>
        <position position="97"/>
    </location>
</feature>
<feature type="modified residue" description="4-carboxyglutamate" evidence="4">
    <location>
        <position position="99"/>
    </location>
</feature>
<feature type="modified residue" description="4-carboxyglutamate" evidence="4">
    <location>
        <position position="103"/>
    </location>
</feature>
<feature type="modified residue" description="4-carboxyglutamate" evidence="4">
    <location>
        <position position="104"/>
    </location>
</feature>
<feature type="modified residue" description="4-carboxyglutamate" evidence="4">
    <location>
        <position position="105"/>
    </location>
</feature>
<feature type="modified residue" description="4-carboxyglutamate" evidence="4">
    <location>
        <position position="108"/>
    </location>
</feature>
<feature type="modified residue" description="4-carboxyglutamate" evidence="4">
    <location>
        <position position="111"/>
    </location>
</feature>
<feature type="modified residue" description="4-carboxyglutamate" evidence="4">
    <location>
        <position position="115"/>
    </location>
</feature>
<feature type="modified residue" description="4-carboxyglutamate" evidence="4">
    <location>
        <position position="118"/>
    </location>
</feature>
<feature type="modified residue" description="4-carboxyglutamate" evidence="4">
    <location>
        <position position="122"/>
    </location>
</feature>
<keyword id="KW-0175">Coiled coil</keyword>
<keyword id="KW-0903">Direct protein sequencing</keyword>
<keyword id="KW-0272">Extracellular matrix</keyword>
<keyword id="KW-0301">Gamma-carboxyglutamic acid</keyword>
<keyword id="KW-0964">Secreted</keyword>
<keyword id="KW-0732">Signal</keyword>
<keyword id="KW-0765">Sulfation</keyword>
<comment type="function">
    <text evidence="1">May be involved in the negative control of osteogenic differentiation of osteochondrogenic precursor cells in peripheral zones of fetal cartilage and at the cartilage-bone interface.</text>
</comment>
<comment type="subcellular location">
    <subcellularLocation>
        <location evidence="1">Secreted</location>
        <location evidence="1">Extracellular space</location>
        <location evidence="1">Extracellular matrix</location>
    </subcellularLocation>
</comment>
<comment type="tissue specificity">
    <text evidence="4">Detected in all tissues tested: heart, liver, kidney, muscle, gonads, brain, ganoid plate, anterior kidney, spleen, spine, cleithrum, head plate, operculum, skull, mandibula, branchial arches, anterior vertebra, and posterior vertebra. Expression is highest in the cartilaginous tissues (skull, mandibula, branchial arches, anterior vertebra and posterior vertebra), with the highest levels found in posterior vertebra. Found in mature and immature chondrocytes within the vertebra and mandibula, and in the chordoblast layer of the notochord in vertebra.</text>
</comment>
<comment type="PTM">
    <text evidence="1">Proteolytically cleaved by a furin-like convertase to generate a persistent C-terminal fragment found in almost the entire cartilage matrix, and affecting osteoblast differentiation.</text>
</comment>
<comment type="PTM">
    <text evidence="1">Sulfated on tyrosine residues.</text>
</comment>
<comment type="similarity">
    <text evidence="6">Belongs to the UCMA family.</text>
</comment>
<gene>
    <name type="primary">ucma</name>
    <name type="synonym">grp</name>
</gene>
<accession>B9TQX1</accession>
<accession>P85209</accession>
<reference evidence="6 7" key="1">
    <citation type="journal article" date="2008" name="J. Biol. Chem.">
        <title>Gla-rich protein (GRP), a new vitamin K-dependent protein identified from sturgeon cartilage and highly conserved in vertebrates.</title>
        <authorList>
            <person name="Viegas C.S.B."/>
            <person name="Simes D.C."/>
            <person name="Laize V."/>
            <person name="Williamson M.K."/>
            <person name="Price P.A."/>
            <person name="Cancela M.L."/>
        </authorList>
    </citation>
    <scope>NUCLEOTIDE SEQUENCE [GENOMIC DNA / MRNA]</scope>
    <scope>PROTEIN SEQUENCE OF 66-85</scope>
    <scope>TISSUE SPECIFICITY</scope>
    <scope>GAMMA-CARBOXYGLUTAMATION AT GLU-72; GLU-76; GLU-85; GLU-89; GLU-92; GLU-93; GLU-97; GLU-99; GLU-103; GLU-104; GLU-105; GLU-108; GLU-111; GLU-115; GLU-118 AND GLU-122</scope>
    <source>
        <tissue evidence="4">Branchial arch region</tissue>
    </source>
</reference>
<protein>
    <recommendedName>
        <fullName evidence="1">Unique cartilage matrix-associated protein</fullName>
    </recommendedName>
    <component>
        <recommendedName>
            <fullName evidence="1">Unique cartilage matrix-associated protein C-terminal fragment</fullName>
            <shortName evidence="1">Ucma-C</shortName>
        </recommendedName>
        <alternativeName>
            <fullName evidence="5 7">Gla-rich protein</fullName>
            <shortName evidence="5">GRP</shortName>
        </alternativeName>
    </component>
</protein>